<sequence length="298" mass="35003">MNHIQEAFLNTLKVERNFSEHTLKSYQDDLIQFNQFLEQEHLQLNTFEYRDARNYLSYLYLNHLKRTSVSRKISTLRTLYEYWMTLDENIINPFVHLVHPKKEKYLPQFSLEEEMEALFTTVEKDTSKNLRDRVILELLYATGIRVSELVNIKKQDIDFYANGVTVLGKGSKERFVPFGAYCRQSIENYLEHFKPIQSCNHDFLILNMKGEAITERGVRYVLNDIVKRTAGVSEIHPHKLRHTFATHLLNQGADLRTVQSLLGHVNLSTTGKYTHVSNQQLRKVYLNAHPRAKKENET</sequence>
<reference key="1">
    <citation type="journal article" date="2000" name="J. Mol. Microbiol. Biotechnol.">
        <title>Genetic characterization of Gram-positive homologs of the XerCD site-specific recombinases.</title>
        <authorList>
            <person name="Chalker A.F."/>
            <person name="Lupas A."/>
            <person name="Ingraham K."/>
            <person name="So C.Y."/>
            <person name="Lunsford R.D."/>
            <person name="Li T."/>
            <person name="Bryant A."/>
            <person name="Holmes D.J."/>
            <person name="Marra A."/>
            <person name="Pearson S.C."/>
            <person name="Ray J."/>
            <person name="Burnham M.K.R."/>
            <person name="Palmer L.M."/>
            <person name="Biswas S."/>
            <person name="Zalacain M."/>
        </authorList>
    </citation>
    <scope>NUCLEOTIDE SEQUENCE [GENOMIC DNA]</scope>
    <source>
        <strain>WCUH29 / NCIMB 40771</strain>
    </source>
</reference>
<gene>
    <name evidence="1" type="primary">xerC</name>
</gene>
<evidence type="ECO:0000255" key="1">
    <source>
        <dbReference type="HAMAP-Rule" id="MF_01808"/>
    </source>
</evidence>
<evidence type="ECO:0000255" key="2">
    <source>
        <dbReference type="PROSITE-ProRule" id="PRU01246"/>
    </source>
</evidence>
<evidence type="ECO:0000255" key="3">
    <source>
        <dbReference type="PROSITE-ProRule" id="PRU01248"/>
    </source>
</evidence>
<feature type="chain" id="PRO_0000095334" description="Tyrosine recombinase XerC">
    <location>
        <begin position="1"/>
        <end position="298"/>
    </location>
</feature>
<feature type="domain" description="Core-binding (CB)" evidence="3">
    <location>
        <begin position="1"/>
        <end position="84"/>
    </location>
</feature>
<feature type="domain" description="Tyr recombinase" evidence="2">
    <location>
        <begin position="105"/>
        <end position="286"/>
    </location>
</feature>
<feature type="active site" evidence="1">
    <location>
        <position position="145"/>
    </location>
</feature>
<feature type="active site" evidence="1">
    <location>
        <position position="169"/>
    </location>
</feature>
<feature type="active site" evidence="1">
    <location>
        <position position="238"/>
    </location>
</feature>
<feature type="active site" evidence="1">
    <location>
        <position position="241"/>
    </location>
</feature>
<feature type="active site" evidence="1">
    <location>
        <position position="264"/>
    </location>
</feature>
<feature type="active site" description="O-(3'-phospho-DNA)-tyrosine intermediate" evidence="1">
    <location>
        <position position="273"/>
    </location>
</feature>
<comment type="function">
    <text evidence="1">Site-specific tyrosine recombinase, which acts by catalyzing the cutting and rejoining of the recombining DNA molecules. The XerC-XerD complex is essential to convert dimers of the bacterial chromosome into monomers to permit their segregation at cell division. It also contributes to the segregational stability of plasmids.</text>
</comment>
<comment type="subunit">
    <text evidence="1">Forms a cyclic heterotetrameric complex composed of two molecules of XerC and two molecules of XerD.</text>
</comment>
<comment type="subcellular location">
    <subcellularLocation>
        <location evidence="1">Cytoplasm</location>
    </subcellularLocation>
</comment>
<comment type="similarity">
    <text evidence="1">Belongs to the 'phage' integrase family. XerC subfamily.</text>
</comment>
<dbReference type="EMBL" id="AF173870">
    <property type="protein sequence ID" value="AAF89877.1"/>
    <property type="molecule type" value="Genomic_DNA"/>
</dbReference>
<dbReference type="SMR" id="Q9KJF6"/>
<dbReference type="GO" id="GO:0005737">
    <property type="term" value="C:cytoplasm"/>
    <property type="evidence" value="ECO:0007669"/>
    <property type="project" value="UniProtKB-SubCell"/>
</dbReference>
<dbReference type="GO" id="GO:0003677">
    <property type="term" value="F:DNA binding"/>
    <property type="evidence" value="ECO:0007669"/>
    <property type="project" value="UniProtKB-KW"/>
</dbReference>
<dbReference type="GO" id="GO:0009037">
    <property type="term" value="F:tyrosine-based site-specific recombinase activity"/>
    <property type="evidence" value="ECO:0007669"/>
    <property type="project" value="UniProtKB-UniRule"/>
</dbReference>
<dbReference type="GO" id="GO:0051301">
    <property type="term" value="P:cell division"/>
    <property type="evidence" value="ECO:0007669"/>
    <property type="project" value="UniProtKB-KW"/>
</dbReference>
<dbReference type="GO" id="GO:0007059">
    <property type="term" value="P:chromosome segregation"/>
    <property type="evidence" value="ECO:0007669"/>
    <property type="project" value="UniProtKB-UniRule"/>
</dbReference>
<dbReference type="GO" id="GO:0006313">
    <property type="term" value="P:DNA transposition"/>
    <property type="evidence" value="ECO:0007669"/>
    <property type="project" value="UniProtKB-UniRule"/>
</dbReference>
<dbReference type="CDD" id="cd00798">
    <property type="entry name" value="INT_XerDC_C"/>
    <property type="match status" value="1"/>
</dbReference>
<dbReference type="Gene3D" id="1.10.150.130">
    <property type="match status" value="1"/>
</dbReference>
<dbReference type="Gene3D" id="1.10.443.10">
    <property type="entry name" value="Intergrase catalytic core"/>
    <property type="match status" value="1"/>
</dbReference>
<dbReference type="HAMAP" id="MF_01808">
    <property type="entry name" value="Recomb_XerC_XerD"/>
    <property type="match status" value="1"/>
</dbReference>
<dbReference type="InterPro" id="IPR044068">
    <property type="entry name" value="CB"/>
</dbReference>
<dbReference type="InterPro" id="IPR011010">
    <property type="entry name" value="DNA_brk_join_enz"/>
</dbReference>
<dbReference type="InterPro" id="IPR013762">
    <property type="entry name" value="Integrase-like_cat_sf"/>
</dbReference>
<dbReference type="InterPro" id="IPR002104">
    <property type="entry name" value="Integrase_catalytic"/>
</dbReference>
<dbReference type="InterPro" id="IPR010998">
    <property type="entry name" value="Integrase_recombinase_N"/>
</dbReference>
<dbReference type="InterPro" id="IPR004107">
    <property type="entry name" value="Integrase_SAM-like_N"/>
</dbReference>
<dbReference type="InterPro" id="IPR011931">
    <property type="entry name" value="Recomb_XerC"/>
</dbReference>
<dbReference type="InterPro" id="IPR023009">
    <property type="entry name" value="Tyrosine_recombinase_XerC/XerD"/>
</dbReference>
<dbReference type="InterPro" id="IPR050090">
    <property type="entry name" value="Tyrosine_recombinase_XerCD"/>
</dbReference>
<dbReference type="NCBIfam" id="NF001399">
    <property type="entry name" value="PRK00283.1"/>
    <property type="match status" value="1"/>
</dbReference>
<dbReference type="NCBIfam" id="NF040815">
    <property type="entry name" value="recomb_XerA_Arch"/>
    <property type="match status" value="1"/>
</dbReference>
<dbReference type="NCBIfam" id="TIGR02224">
    <property type="entry name" value="recomb_XerC"/>
    <property type="match status" value="1"/>
</dbReference>
<dbReference type="PANTHER" id="PTHR30349">
    <property type="entry name" value="PHAGE INTEGRASE-RELATED"/>
    <property type="match status" value="1"/>
</dbReference>
<dbReference type="PANTHER" id="PTHR30349:SF77">
    <property type="entry name" value="TYROSINE RECOMBINASE XERC"/>
    <property type="match status" value="1"/>
</dbReference>
<dbReference type="Pfam" id="PF02899">
    <property type="entry name" value="Phage_int_SAM_1"/>
    <property type="match status" value="1"/>
</dbReference>
<dbReference type="Pfam" id="PF00589">
    <property type="entry name" value="Phage_integrase"/>
    <property type="match status" value="1"/>
</dbReference>
<dbReference type="SUPFAM" id="SSF56349">
    <property type="entry name" value="DNA breaking-rejoining enzymes"/>
    <property type="match status" value="1"/>
</dbReference>
<dbReference type="PROSITE" id="PS51900">
    <property type="entry name" value="CB"/>
    <property type="match status" value="1"/>
</dbReference>
<dbReference type="PROSITE" id="PS51898">
    <property type="entry name" value="TYR_RECOMBINASE"/>
    <property type="match status" value="1"/>
</dbReference>
<name>XERC_STAAU</name>
<protein>
    <recommendedName>
        <fullName evidence="1">Tyrosine recombinase XerC</fullName>
    </recommendedName>
</protein>
<accession>Q9KJF6</accession>
<proteinExistence type="inferred from homology"/>
<organism>
    <name type="scientific">Staphylococcus aureus</name>
    <dbReference type="NCBI Taxonomy" id="1280"/>
    <lineage>
        <taxon>Bacteria</taxon>
        <taxon>Bacillati</taxon>
        <taxon>Bacillota</taxon>
        <taxon>Bacilli</taxon>
        <taxon>Bacillales</taxon>
        <taxon>Staphylococcaceae</taxon>
        <taxon>Staphylococcus</taxon>
    </lineage>
</organism>
<keyword id="KW-0131">Cell cycle</keyword>
<keyword id="KW-0132">Cell division</keyword>
<keyword id="KW-0159">Chromosome partition</keyword>
<keyword id="KW-0963">Cytoplasm</keyword>
<keyword id="KW-0229">DNA integration</keyword>
<keyword id="KW-0233">DNA recombination</keyword>
<keyword id="KW-0238">DNA-binding</keyword>